<organism>
    <name type="scientific">Escherichia coli O6:H1 (strain CFT073 / ATCC 700928 / UPEC)</name>
    <dbReference type="NCBI Taxonomy" id="199310"/>
    <lineage>
        <taxon>Bacteria</taxon>
        <taxon>Pseudomonadati</taxon>
        <taxon>Pseudomonadota</taxon>
        <taxon>Gammaproteobacteria</taxon>
        <taxon>Enterobacterales</taxon>
        <taxon>Enterobacteriaceae</taxon>
        <taxon>Escherichia</taxon>
    </lineage>
</organism>
<accession>Q8FFN4</accession>
<sequence length="419" mass="45398">MRFDTVIMGGGLAGLLCGLQLQKHGLRCAIVTRGQSALHFSSGSLDLLSHLPDGQPVTDIHSGLESLRQQAPAHPYTLLGPQRVLDLACQAQALIAESGAQLQGSVELAHQRITPLGTLRSTWLSSPEVPVWPLPAKKICVVGISGLMDFQAHLAAASLRELDLAVETAEIELPELDVLRNNATEFRAVNIARFLDNEENWPLIIDALIPVANTCEMILMPACFGLADDKLWRWLNEKLPCSLMLLPTLPPSVLGIRLQNQLQRQFVRQGGVWMPGDEVKKVTCKNGVVNEIWTRNHADIPLRPRFVVLASGSFFSGGLVAERDGIREPILGLDVLQTATRGEWYKGDFFAPQPWQQFGVTTDEALRPSQAGQTIENLFAIGSVLGGFDPIAQGCGGGVCAVSALHVAQQIAQRAGGQQ</sequence>
<feature type="chain" id="PRO_0000204560" description="Anaerobic glycerol-3-phosphate dehydrogenase subunit B">
    <location>
        <begin position="1"/>
        <end position="419"/>
    </location>
</feature>
<name>GLPB_ECOL6</name>
<gene>
    <name evidence="2" type="primary">glpB</name>
    <name type="ordered locus">c2783</name>
</gene>
<keyword id="KW-0997">Cell inner membrane</keyword>
<keyword id="KW-1003">Cell membrane</keyword>
<keyword id="KW-0285">Flavoprotein</keyword>
<keyword id="KW-0288">FMN</keyword>
<keyword id="KW-0472">Membrane</keyword>
<keyword id="KW-0560">Oxidoreductase</keyword>
<keyword id="KW-1185">Reference proteome</keyword>
<comment type="function">
    <text evidence="2">Conversion of glycerol 3-phosphate to dihydroxyacetone. Uses fumarate or nitrate as electron acceptor.</text>
</comment>
<comment type="catalytic activity">
    <reaction evidence="2">
        <text>a quinone + sn-glycerol 3-phosphate = dihydroxyacetone phosphate + a quinol</text>
        <dbReference type="Rhea" id="RHEA:18977"/>
        <dbReference type="ChEBI" id="CHEBI:24646"/>
        <dbReference type="ChEBI" id="CHEBI:57597"/>
        <dbReference type="ChEBI" id="CHEBI:57642"/>
        <dbReference type="ChEBI" id="CHEBI:132124"/>
        <dbReference type="EC" id="1.1.5.3"/>
    </reaction>
</comment>
<comment type="cofactor">
    <cofactor evidence="2">
        <name>FMN</name>
        <dbReference type="ChEBI" id="CHEBI:58210"/>
    </cofactor>
</comment>
<comment type="pathway">
    <text evidence="2">Polyol metabolism; glycerol degradation via glycerol kinase pathway; glycerone phosphate from sn-glycerol 3-phosphate (anaerobic route): step 1/1.</text>
</comment>
<comment type="subunit">
    <text evidence="2">Composed of a catalytic GlpA/B dimer and of membrane bound GlpC.</text>
</comment>
<comment type="subcellular location">
    <subcellularLocation>
        <location evidence="1">Cell inner membrane</location>
        <topology evidence="1">Peripheral membrane protein</topology>
    </subcellularLocation>
    <text evidence="1">Loosely bound to the cytoplasmic membrane often occurring in vesicles associated with fumarate reductase.</text>
</comment>
<comment type="similarity">
    <text evidence="2">Belongs to the anaerobic G-3-P dehydrogenase subunit B family.</text>
</comment>
<comment type="sequence caution" evidence="3">
    <conflict type="erroneous initiation">
        <sequence resource="EMBL-CDS" id="AAN81237"/>
    </conflict>
</comment>
<evidence type="ECO:0000250" key="1"/>
<evidence type="ECO:0000255" key="2">
    <source>
        <dbReference type="HAMAP-Rule" id="MF_00753"/>
    </source>
</evidence>
<evidence type="ECO:0000305" key="3"/>
<protein>
    <recommendedName>
        <fullName evidence="2">Anaerobic glycerol-3-phosphate dehydrogenase subunit B</fullName>
        <shortName evidence="2">Anaerobic G-3-P dehydrogenase subunit B</shortName>
        <shortName evidence="2">Anaerobic G3Pdhase B</shortName>
        <ecNumber evidence="2">1.1.5.3</ecNumber>
    </recommendedName>
</protein>
<reference key="1">
    <citation type="journal article" date="2002" name="Proc. Natl. Acad. Sci. U.S.A.">
        <title>Extensive mosaic structure revealed by the complete genome sequence of uropathogenic Escherichia coli.</title>
        <authorList>
            <person name="Welch R.A."/>
            <person name="Burland V."/>
            <person name="Plunkett G. III"/>
            <person name="Redford P."/>
            <person name="Roesch P."/>
            <person name="Rasko D."/>
            <person name="Buckles E.L."/>
            <person name="Liou S.-R."/>
            <person name="Boutin A."/>
            <person name="Hackett J."/>
            <person name="Stroud D."/>
            <person name="Mayhew G.F."/>
            <person name="Rose D.J."/>
            <person name="Zhou S."/>
            <person name="Schwartz D.C."/>
            <person name="Perna N.T."/>
            <person name="Mobley H.L.T."/>
            <person name="Donnenberg M.S."/>
            <person name="Blattner F.R."/>
        </authorList>
    </citation>
    <scope>NUCLEOTIDE SEQUENCE [LARGE SCALE GENOMIC DNA]</scope>
    <source>
        <strain>CFT073 / ATCC 700928 / UPEC</strain>
    </source>
</reference>
<proteinExistence type="inferred from homology"/>
<dbReference type="EC" id="1.1.5.3" evidence="2"/>
<dbReference type="EMBL" id="AE014075">
    <property type="protein sequence ID" value="AAN81237.1"/>
    <property type="status" value="ALT_INIT"/>
    <property type="molecule type" value="Genomic_DNA"/>
</dbReference>
<dbReference type="RefSeq" id="WP_001209933.1">
    <property type="nucleotide sequence ID" value="NZ_CP051263.1"/>
</dbReference>
<dbReference type="STRING" id="199310.c2783"/>
<dbReference type="KEGG" id="ecc:c2783"/>
<dbReference type="eggNOG" id="COG3075">
    <property type="taxonomic scope" value="Bacteria"/>
</dbReference>
<dbReference type="HOGENOM" id="CLU_047793_0_0_6"/>
<dbReference type="UniPathway" id="UPA00618">
    <property type="reaction ID" value="UER00673"/>
</dbReference>
<dbReference type="Proteomes" id="UP000001410">
    <property type="component" value="Chromosome"/>
</dbReference>
<dbReference type="GO" id="GO:0009331">
    <property type="term" value="C:glycerol-3-phosphate dehydrogenase (FAD) complex"/>
    <property type="evidence" value="ECO:0007669"/>
    <property type="project" value="InterPro"/>
</dbReference>
<dbReference type="GO" id="GO:0005886">
    <property type="term" value="C:plasma membrane"/>
    <property type="evidence" value="ECO:0007669"/>
    <property type="project" value="UniProtKB-SubCell"/>
</dbReference>
<dbReference type="GO" id="GO:0004368">
    <property type="term" value="F:glycerol-3-phosphate dehydrogenase (quinone) activity"/>
    <property type="evidence" value="ECO:0007669"/>
    <property type="project" value="UniProtKB-UniRule"/>
</dbReference>
<dbReference type="GO" id="GO:0009061">
    <property type="term" value="P:anaerobic respiration"/>
    <property type="evidence" value="ECO:0007669"/>
    <property type="project" value="TreeGrafter"/>
</dbReference>
<dbReference type="GO" id="GO:0019563">
    <property type="term" value="P:glycerol catabolic process"/>
    <property type="evidence" value="ECO:0007669"/>
    <property type="project" value="UniProtKB-UniRule"/>
</dbReference>
<dbReference type="GO" id="GO:0046168">
    <property type="term" value="P:glycerol-3-phosphate catabolic process"/>
    <property type="evidence" value="ECO:0007669"/>
    <property type="project" value="TreeGrafter"/>
</dbReference>
<dbReference type="Gene3D" id="3.50.50.60">
    <property type="entry name" value="FAD/NAD(P)-binding domain"/>
    <property type="match status" value="1"/>
</dbReference>
<dbReference type="HAMAP" id="MF_00753">
    <property type="entry name" value="Glycerol3P_GlpB"/>
    <property type="match status" value="1"/>
</dbReference>
<dbReference type="InterPro" id="IPR003953">
    <property type="entry name" value="FAD-dep_OxRdtase_2_FAD-bd"/>
</dbReference>
<dbReference type="InterPro" id="IPR050315">
    <property type="entry name" value="FAD-oxidoreductase_2"/>
</dbReference>
<dbReference type="InterPro" id="IPR036188">
    <property type="entry name" value="FAD/NAD-bd_sf"/>
</dbReference>
<dbReference type="InterPro" id="IPR009158">
    <property type="entry name" value="G3P_DH_GlpB_su"/>
</dbReference>
<dbReference type="NCBIfam" id="TIGR03378">
    <property type="entry name" value="glycerol3P_GlpB"/>
    <property type="match status" value="1"/>
</dbReference>
<dbReference type="NCBIfam" id="NF003718">
    <property type="entry name" value="PRK05329.1-1"/>
    <property type="match status" value="1"/>
</dbReference>
<dbReference type="NCBIfam" id="NF003719">
    <property type="entry name" value="PRK05329.1-2"/>
    <property type="match status" value="1"/>
</dbReference>
<dbReference type="NCBIfam" id="NF003720">
    <property type="entry name" value="PRK05329.1-3"/>
    <property type="match status" value="1"/>
</dbReference>
<dbReference type="NCBIfam" id="NF003721">
    <property type="entry name" value="PRK05329.1-4"/>
    <property type="match status" value="1"/>
</dbReference>
<dbReference type="PANTHER" id="PTHR43400:SF11">
    <property type="entry name" value="ANAEROBIC GLYCEROL-3-PHOSPHATE DEHYDROGENASE SUBUNIT B"/>
    <property type="match status" value="1"/>
</dbReference>
<dbReference type="PANTHER" id="PTHR43400">
    <property type="entry name" value="FUMARATE REDUCTASE"/>
    <property type="match status" value="1"/>
</dbReference>
<dbReference type="Pfam" id="PF00890">
    <property type="entry name" value="FAD_binding_2"/>
    <property type="match status" value="1"/>
</dbReference>
<dbReference type="PIRSF" id="PIRSF000141">
    <property type="entry name" value="Anaerobic_G3P_dh"/>
    <property type="match status" value="1"/>
</dbReference>
<dbReference type="SUPFAM" id="SSF51905">
    <property type="entry name" value="FAD/NAD(P)-binding domain"/>
    <property type="match status" value="1"/>
</dbReference>